<name>VP6_NCMV</name>
<proteinExistence type="predicted"/>
<organismHost>
    <name type="scientific">Hordeum vulgare</name>
    <name type="common">Barley</name>
    <dbReference type="NCBI Taxonomy" id="4513"/>
</organismHost>
<gene>
    <name type="primary">6</name>
</gene>
<feature type="chain" id="PRO_0000299216" description="Protein 6">
    <location>
        <begin position="1"/>
        <end position="122"/>
    </location>
</feature>
<protein>
    <recommendedName>
        <fullName>Protein 6</fullName>
    </recommendedName>
</protein>
<accession>Q9JGT6</accession>
<dbReference type="EMBL" id="AB030277">
    <property type="protein sequence ID" value="BAA95349.1"/>
    <property type="molecule type" value="Genomic_RNA"/>
</dbReference>
<dbReference type="RefSeq" id="NP_057959.1">
    <property type="nucleotide sequence ID" value="NC_002251.1"/>
</dbReference>
<dbReference type="GeneID" id="1457721"/>
<dbReference type="KEGG" id="vg:1457721"/>
<dbReference type="Proteomes" id="UP000007785">
    <property type="component" value="Genome"/>
</dbReference>
<sequence length="122" mass="12822">MAAVLVGSEVSVAGKLSKVTVDVDASKKFSWAEGKGSLVWKINDSDLALRSTNAGIEVKLTPKKGTTTSGIVLDLEGAKLTLSCGYKSVVVLFELGETPEGRGFSEMRSLSASNLSLLRMAN</sequence>
<reference key="1">
    <citation type="journal article" date="2000" name="Arch. Virol.">
        <title>Complete nucleotide sequence of Northern cereal mosaic virus and its genome organization.</title>
        <authorList>
            <person name="Tanno F."/>
            <person name="Nakatsu A."/>
            <person name="Toriyama S."/>
            <person name="Kojima M."/>
        </authorList>
    </citation>
    <scope>NUCLEOTIDE SEQUENCE [GENOMIC RNA]</scope>
</reference>
<organism>
    <name type="scientific">Northern cereal mosaic virus</name>
    <name type="common">NCMV</name>
    <dbReference type="NCBI Taxonomy" id="1985704"/>
    <lineage>
        <taxon>Viruses</taxon>
        <taxon>Riboviria</taxon>
        <taxon>Orthornavirae</taxon>
        <taxon>Negarnaviricota</taxon>
        <taxon>Haploviricotina</taxon>
        <taxon>Monjiviricetes</taxon>
        <taxon>Mononegavirales</taxon>
        <taxon>Rhabdoviridae</taxon>
        <taxon>Betarhabdovirinae</taxon>
        <taxon>Cytorhabdovirus</taxon>
    </lineage>
</organism>
<keyword id="KW-1185">Reference proteome</keyword>